<gene>
    <name evidence="1" type="primary">ndk</name>
    <name type="ordered locus">CT_500</name>
</gene>
<keyword id="KW-0067">ATP-binding</keyword>
<keyword id="KW-0963">Cytoplasm</keyword>
<keyword id="KW-0418">Kinase</keyword>
<keyword id="KW-0460">Magnesium</keyword>
<keyword id="KW-0479">Metal-binding</keyword>
<keyword id="KW-0546">Nucleotide metabolism</keyword>
<keyword id="KW-0547">Nucleotide-binding</keyword>
<keyword id="KW-0597">Phosphoprotein</keyword>
<keyword id="KW-1185">Reference proteome</keyword>
<keyword id="KW-0808">Transferase</keyword>
<organism>
    <name type="scientific">Chlamydia trachomatis serovar D (strain ATCC VR-885 / DSM 19411 / UW-3/Cx)</name>
    <dbReference type="NCBI Taxonomy" id="272561"/>
    <lineage>
        <taxon>Bacteria</taxon>
        <taxon>Pseudomonadati</taxon>
        <taxon>Chlamydiota</taxon>
        <taxon>Chlamydiia</taxon>
        <taxon>Chlamydiales</taxon>
        <taxon>Chlamydiaceae</taxon>
        <taxon>Chlamydia/Chlamydophila group</taxon>
        <taxon>Chlamydia</taxon>
    </lineage>
</organism>
<accession>O84508</accession>
<protein>
    <recommendedName>
        <fullName evidence="1">Nucleoside diphosphate kinase</fullName>
        <shortName evidence="1">NDK</shortName>
        <shortName evidence="1">NDP kinase</shortName>
        <ecNumber evidence="1">2.7.4.6</ecNumber>
    </recommendedName>
    <alternativeName>
        <fullName evidence="1">Nucleoside-2-P kinase</fullName>
    </alternativeName>
</protein>
<comment type="function">
    <text evidence="1">Major role in the synthesis of nucleoside triphosphates other than ATP. The ATP gamma phosphate is transferred to the NDP beta phosphate via a ping-pong mechanism, using a phosphorylated active-site intermediate.</text>
</comment>
<comment type="catalytic activity">
    <reaction evidence="1">
        <text>a 2'-deoxyribonucleoside 5'-diphosphate + ATP = a 2'-deoxyribonucleoside 5'-triphosphate + ADP</text>
        <dbReference type="Rhea" id="RHEA:44640"/>
        <dbReference type="ChEBI" id="CHEBI:30616"/>
        <dbReference type="ChEBI" id="CHEBI:61560"/>
        <dbReference type="ChEBI" id="CHEBI:73316"/>
        <dbReference type="ChEBI" id="CHEBI:456216"/>
        <dbReference type="EC" id="2.7.4.6"/>
    </reaction>
</comment>
<comment type="catalytic activity">
    <reaction evidence="1">
        <text>a ribonucleoside 5'-diphosphate + ATP = a ribonucleoside 5'-triphosphate + ADP</text>
        <dbReference type="Rhea" id="RHEA:18113"/>
        <dbReference type="ChEBI" id="CHEBI:30616"/>
        <dbReference type="ChEBI" id="CHEBI:57930"/>
        <dbReference type="ChEBI" id="CHEBI:61557"/>
        <dbReference type="ChEBI" id="CHEBI:456216"/>
        <dbReference type="EC" id="2.7.4.6"/>
    </reaction>
</comment>
<comment type="cofactor">
    <cofactor evidence="1">
        <name>Mg(2+)</name>
        <dbReference type="ChEBI" id="CHEBI:18420"/>
    </cofactor>
</comment>
<comment type="subunit">
    <text evidence="1">Homotetramer.</text>
</comment>
<comment type="subcellular location">
    <subcellularLocation>
        <location evidence="1">Cytoplasm</location>
    </subcellularLocation>
</comment>
<comment type="similarity">
    <text evidence="1 2">Belongs to the NDK family.</text>
</comment>
<proteinExistence type="inferred from homology"/>
<reference key="1">
    <citation type="journal article" date="1998" name="Science">
        <title>Genome sequence of an obligate intracellular pathogen of humans: Chlamydia trachomatis.</title>
        <authorList>
            <person name="Stephens R.S."/>
            <person name="Kalman S."/>
            <person name="Lammel C.J."/>
            <person name="Fan J."/>
            <person name="Marathe R."/>
            <person name="Aravind L."/>
            <person name="Mitchell W.P."/>
            <person name="Olinger L."/>
            <person name="Tatusov R.L."/>
            <person name="Zhao Q."/>
            <person name="Koonin E.V."/>
            <person name="Davis R.W."/>
        </authorList>
    </citation>
    <scope>NUCLEOTIDE SEQUENCE [LARGE SCALE GENOMIC DNA]</scope>
    <source>
        <strain>ATCC VR-885 / DSM 19411 / UW-3/Cx</strain>
    </source>
</reference>
<evidence type="ECO:0000255" key="1">
    <source>
        <dbReference type="HAMAP-Rule" id="MF_00451"/>
    </source>
</evidence>
<evidence type="ECO:0000305" key="2"/>
<feature type="chain" id="PRO_0000136968" description="Nucleoside diphosphate kinase">
    <location>
        <begin position="1"/>
        <end position="141"/>
    </location>
</feature>
<feature type="active site" description="Pros-phosphohistidine intermediate" evidence="1">
    <location>
        <position position="115"/>
    </location>
</feature>
<feature type="binding site" evidence="1">
    <location>
        <position position="9"/>
    </location>
    <ligand>
        <name>ATP</name>
        <dbReference type="ChEBI" id="CHEBI:30616"/>
    </ligand>
</feature>
<feature type="binding site" evidence="1">
    <location>
        <position position="57"/>
    </location>
    <ligand>
        <name>ATP</name>
        <dbReference type="ChEBI" id="CHEBI:30616"/>
    </ligand>
</feature>
<feature type="binding site" evidence="1">
    <location>
        <position position="85"/>
    </location>
    <ligand>
        <name>ATP</name>
        <dbReference type="ChEBI" id="CHEBI:30616"/>
    </ligand>
</feature>
<feature type="binding site" evidence="1">
    <location>
        <position position="91"/>
    </location>
    <ligand>
        <name>ATP</name>
        <dbReference type="ChEBI" id="CHEBI:30616"/>
    </ligand>
</feature>
<feature type="binding site" evidence="1">
    <location>
        <position position="102"/>
    </location>
    <ligand>
        <name>ATP</name>
        <dbReference type="ChEBI" id="CHEBI:30616"/>
    </ligand>
</feature>
<feature type="binding site" evidence="1">
    <location>
        <position position="112"/>
    </location>
    <ligand>
        <name>ATP</name>
        <dbReference type="ChEBI" id="CHEBI:30616"/>
    </ligand>
</feature>
<sequence length="141" mass="15323">MEQTLSIIKPDSVGKAHIGEIIAIFEKSGLRIAAMKMVHLSVKEAEGFYVVHKERPFFQELVDFMISGPVVVMVLQGENAVDRNRELMGATNPKEAAEGSIRALFGESIGVNAVHGSDSLENAAIEVSYFFAKTEIVNSVA</sequence>
<dbReference type="EC" id="2.7.4.6" evidence="1"/>
<dbReference type="EMBL" id="AE001273">
    <property type="protein sequence ID" value="AAC68101.1"/>
    <property type="molecule type" value="Genomic_DNA"/>
</dbReference>
<dbReference type="PIR" id="B71504">
    <property type="entry name" value="B71504"/>
</dbReference>
<dbReference type="RefSeq" id="NP_220015.1">
    <property type="nucleotide sequence ID" value="NC_000117.1"/>
</dbReference>
<dbReference type="RefSeq" id="WP_010725218.1">
    <property type="nucleotide sequence ID" value="NC_000117.1"/>
</dbReference>
<dbReference type="SMR" id="O84508"/>
<dbReference type="FunCoup" id="O84508">
    <property type="interactions" value="223"/>
</dbReference>
<dbReference type="STRING" id="272561.CT_500"/>
<dbReference type="EnsemblBacteria" id="AAC68101">
    <property type="protein sequence ID" value="AAC68101"/>
    <property type="gene ID" value="CT_500"/>
</dbReference>
<dbReference type="GeneID" id="884275"/>
<dbReference type="KEGG" id="ctr:CT_500"/>
<dbReference type="PATRIC" id="fig|272561.5.peg.544"/>
<dbReference type="HOGENOM" id="CLU_060216_8_1_0"/>
<dbReference type="InParanoid" id="O84508"/>
<dbReference type="OrthoDB" id="9801161at2"/>
<dbReference type="Proteomes" id="UP000000431">
    <property type="component" value="Chromosome"/>
</dbReference>
<dbReference type="GO" id="GO:0005737">
    <property type="term" value="C:cytoplasm"/>
    <property type="evidence" value="ECO:0007669"/>
    <property type="project" value="UniProtKB-SubCell"/>
</dbReference>
<dbReference type="GO" id="GO:0005524">
    <property type="term" value="F:ATP binding"/>
    <property type="evidence" value="ECO:0007669"/>
    <property type="project" value="UniProtKB-UniRule"/>
</dbReference>
<dbReference type="GO" id="GO:0046872">
    <property type="term" value="F:metal ion binding"/>
    <property type="evidence" value="ECO:0007669"/>
    <property type="project" value="UniProtKB-KW"/>
</dbReference>
<dbReference type="GO" id="GO:0004550">
    <property type="term" value="F:nucleoside diphosphate kinase activity"/>
    <property type="evidence" value="ECO:0007669"/>
    <property type="project" value="UniProtKB-UniRule"/>
</dbReference>
<dbReference type="GO" id="GO:0006241">
    <property type="term" value="P:CTP biosynthetic process"/>
    <property type="evidence" value="ECO:0007669"/>
    <property type="project" value="UniProtKB-UniRule"/>
</dbReference>
<dbReference type="GO" id="GO:0006183">
    <property type="term" value="P:GTP biosynthetic process"/>
    <property type="evidence" value="ECO:0007669"/>
    <property type="project" value="UniProtKB-UniRule"/>
</dbReference>
<dbReference type="GO" id="GO:0006163">
    <property type="term" value="P:purine nucleotide metabolic process"/>
    <property type="evidence" value="ECO:0000318"/>
    <property type="project" value="GO_Central"/>
</dbReference>
<dbReference type="GO" id="GO:0006220">
    <property type="term" value="P:pyrimidine nucleotide metabolic process"/>
    <property type="evidence" value="ECO:0000318"/>
    <property type="project" value="GO_Central"/>
</dbReference>
<dbReference type="GO" id="GO:0006228">
    <property type="term" value="P:UTP biosynthetic process"/>
    <property type="evidence" value="ECO:0007669"/>
    <property type="project" value="UniProtKB-UniRule"/>
</dbReference>
<dbReference type="CDD" id="cd04413">
    <property type="entry name" value="NDPk_I"/>
    <property type="match status" value="1"/>
</dbReference>
<dbReference type="FunFam" id="3.30.70.141:FF:000001">
    <property type="entry name" value="Nucleoside diphosphate kinase"/>
    <property type="match status" value="1"/>
</dbReference>
<dbReference type="Gene3D" id="3.30.70.141">
    <property type="entry name" value="Nucleoside diphosphate kinase-like domain"/>
    <property type="match status" value="1"/>
</dbReference>
<dbReference type="HAMAP" id="MF_00451">
    <property type="entry name" value="NDP_kinase"/>
    <property type="match status" value="1"/>
</dbReference>
<dbReference type="InterPro" id="IPR034907">
    <property type="entry name" value="NDK-like_dom"/>
</dbReference>
<dbReference type="InterPro" id="IPR036850">
    <property type="entry name" value="NDK-like_dom_sf"/>
</dbReference>
<dbReference type="InterPro" id="IPR001564">
    <property type="entry name" value="Nucleoside_diP_kinase"/>
</dbReference>
<dbReference type="InterPro" id="IPR023005">
    <property type="entry name" value="Nucleoside_diP_kinase_AS"/>
</dbReference>
<dbReference type="NCBIfam" id="NF001908">
    <property type="entry name" value="PRK00668.1"/>
    <property type="match status" value="1"/>
</dbReference>
<dbReference type="PANTHER" id="PTHR46161">
    <property type="entry name" value="NUCLEOSIDE DIPHOSPHATE KINASE"/>
    <property type="match status" value="1"/>
</dbReference>
<dbReference type="PANTHER" id="PTHR46161:SF3">
    <property type="entry name" value="NUCLEOSIDE DIPHOSPHATE KINASE DDB_G0292928-RELATED"/>
    <property type="match status" value="1"/>
</dbReference>
<dbReference type="Pfam" id="PF00334">
    <property type="entry name" value="NDK"/>
    <property type="match status" value="1"/>
</dbReference>
<dbReference type="PRINTS" id="PR01243">
    <property type="entry name" value="NUCDPKINASE"/>
</dbReference>
<dbReference type="SMART" id="SM00562">
    <property type="entry name" value="NDK"/>
    <property type="match status" value="1"/>
</dbReference>
<dbReference type="SUPFAM" id="SSF54919">
    <property type="entry name" value="Nucleoside diphosphate kinase, NDK"/>
    <property type="match status" value="1"/>
</dbReference>
<dbReference type="PROSITE" id="PS00469">
    <property type="entry name" value="NDPK"/>
    <property type="match status" value="1"/>
</dbReference>
<dbReference type="PROSITE" id="PS51374">
    <property type="entry name" value="NDPK_LIKE"/>
    <property type="match status" value="1"/>
</dbReference>
<name>NDK_CHLTR</name>